<dbReference type="EMBL" id="FO081325">
    <property type="protein sequence ID" value="CCD70800.1"/>
    <property type="molecule type" value="Genomic_DNA"/>
</dbReference>
<dbReference type="PIR" id="T16619">
    <property type="entry name" value="T16619"/>
</dbReference>
<dbReference type="RefSeq" id="NP_001024792.2">
    <property type="nucleotide sequence ID" value="NM_001029621.6"/>
</dbReference>
<dbReference type="SMR" id="Q21434"/>
<dbReference type="FunCoup" id="Q21434">
    <property type="interactions" value="2297"/>
</dbReference>
<dbReference type="STRING" id="6239.K11G12.4a.1"/>
<dbReference type="TCDB" id="2.A.55.2.16">
    <property type="family name" value="the metal ion (mn(2+)-iron) transporter (nramp) family"/>
</dbReference>
<dbReference type="GlyCosmos" id="Q21434">
    <property type="glycosylation" value="2 sites, No reported glycans"/>
</dbReference>
<dbReference type="PaxDb" id="6239-K11G12.4a"/>
<dbReference type="EnsemblMetazoa" id="K11G12.4a.1">
    <property type="protein sequence ID" value="K11G12.4a.1"/>
    <property type="gene ID" value="WBGene00004876"/>
</dbReference>
<dbReference type="GeneID" id="180939"/>
<dbReference type="KEGG" id="cel:CELE_K11G12.4"/>
<dbReference type="UCSC" id="K11G12.4b">
    <property type="organism name" value="c. elegans"/>
</dbReference>
<dbReference type="AGR" id="WB:WBGene00004876"/>
<dbReference type="CTD" id="180939"/>
<dbReference type="WormBase" id="K11G12.4a">
    <property type="protein sequence ID" value="CE41828"/>
    <property type="gene ID" value="WBGene00004876"/>
    <property type="gene designation" value="smf-1"/>
</dbReference>
<dbReference type="eggNOG" id="KOG1291">
    <property type="taxonomic scope" value="Eukaryota"/>
</dbReference>
<dbReference type="GeneTree" id="ENSGT00940000170016"/>
<dbReference type="HOGENOM" id="CLU_020088_5_2_1"/>
<dbReference type="InParanoid" id="Q21434"/>
<dbReference type="OMA" id="STYLVWT"/>
<dbReference type="OrthoDB" id="409173at2759"/>
<dbReference type="PhylomeDB" id="Q21434"/>
<dbReference type="Reactome" id="R-CEL-1222556">
    <property type="pathway name" value="ROS and RNS production in phagocytes"/>
</dbReference>
<dbReference type="Reactome" id="R-CEL-425410">
    <property type="pathway name" value="Metal ion SLC transporters"/>
</dbReference>
<dbReference type="Reactome" id="R-CEL-6798695">
    <property type="pathway name" value="Neutrophil degranulation"/>
</dbReference>
<dbReference type="Reactome" id="R-CEL-6803544">
    <property type="pathway name" value="Ion influx/efflux at host-pathogen interface"/>
</dbReference>
<dbReference type="Reactome" id="R-CEL-917937">
    <property type="pathway name" value="Iron uptake and transport"/>
</dbReference>
<dbReference type="PRO" id="PR:Q21434"/>
<dbReference type="Proteomes" id="UP000001940">
    <property type="component" value="Chromosome X"/>
</dbReference>
<dbReference type="Bgee" id="WBGene00004876">
    <property type="expression patterns" value="Expressed in embryo and 3 other cell types or tissues"/>
</dbReference>
<dbReference type="GO" id="GO:0016324">
    <property type="term" value="C:apical plasma membrane"/>
    <property type="evidence" value="ECO:0000314"/>
    <property type="project" value="WormBase"/>
</dbReference>
<dbReference type="GO" id="GO:0010008">
    <property type="term" value="C:endosome membrane"/>
    <property type="evidence" value="ECO:0000318"/>
    <property type="project" value="GO_Central"/>
</dbReference>
<dbReference type="GO" id="GO:0005886">
    <property type="term" value="C:plasma membrane"/>
    <property type="evidence" value="ECO:0000318"/>
    <property type="project" value="GO_Central"/>
</dbReference>
<dbReference type="GO" id="GO:0015086">
    <property type="term" value="F:cadmium ion transmembrane transporter activity"/>
    <property type="evidence" value="ECO:0000318"/>
    <property type="project" value="GO_Central"/>
</dbReference>
<dbReference type="GO" id="GO:0005381">
    <property type="term" value="F:iron ion transmembrane transporter activity"/>
    <property type="evidence" value="ECO:0000318"/>
    <property type="project" value="GO_Central"/>
</dbReference>
<dbReference type="GO" id="GO:0005384">
    <property type="term" value="F:manganese ion transmembrane transporter activity"/>
    <property type="evidence" value="ECO:0000318"/>
    <property type="project" value="GO_Central"/>
</dbReference>
<dbReference type="GO" id="GO:0046915">
    <property type="term" value="F:transition metal ion transmembrane transporter activity"/>
    <property type="evidence" value="ECO:0000250"/>
    <property type="project" value="WormBase"/>
</dbReference>
<dbReference type="GO" id="GO:0006879">
    <property type="term" value="P:intracellular iron ion homeostasis"/>
    <property type="evidence" value="ECO:0000315"/>
    <property type="project" value="WormBase"/>
</dbReference>
<dbReference type="GO" id="GO:0034755">
    <property type="term" value="P:iron ion transmembrane transport"/>
    <property type="evidence" value="ECO:0000318"/>
    <property type="project" value="GO_Central"/>
</dbReference>
<dbReference type="GO" id="GO:0055071">
    <property type="term" value="P:manganese ion homeostasis"/>
    <property type="evidence" value="ECO:0000315"/>
    <property type="project" value="WormBase"/>
</dbReference>
<dbReference type="GO" id="GO:0006828">
    <property type="term" value="P:manganese ion transport"/>
    <property type="evidence" value="ECO:0000318"/>
    <property type="project" value="GO_Central"/>
</dbReference>
<dbReference type="GO" id="GO:1905803">
    <property type="term" value="P:negative regulation of cellular response to manganese ion"/>
    <property type="evidence" value="ECO:0000315"/>
    <property type="project" value="UniProtKB"/>
</dbReference>
<dbReference type="GO" id="GO:0010042">
    <property type="term" value="P:response to manganese ion"/>
    <property type="evidence" value="ECO:0000315"/>
    <property type="project" value="WormBase"/>
</dbReference>
<dbReference type="GO" id="GO:0010038">
    <property type="term" value="P:response to metal ion"/>
    <property type="evidence" value="ECO:0000316"/>
    <property type="project" value="WormBase"/>
</dbReference>
<dbReference type="GO" id="GO:0000041">
    <property type="term" value="P:transition metal ion transport"/>
    <property type="evidence" value="ECO:0000250"/>
    <property type="project" value="WormBase"/>
</dbReference>
<dbReference type="HAMAP" id="MF_00221">
    <property type="entry name" value="NRAMP"/>
    <property type="match status" value="1"/>
</dbReference>
<dbReference type="InterPro" id="IPR001046">
    <property type="entry name" value="NRAMP_fam"/>
</dbReference>
<dbReference type="NCBIfam" id="TIGR01197">
    <property type="entry name" value="nramp"/>
    <property type="match status" value="1"/>
</dbReference>
<dbReference type="NCBIfam" id="NF037982">
    <property type="entry name" value="Nramp_1"/>
    <property type="match status" value="1"/>
</dbReference>
<dbReference type="PANTHER" id="PTHR11706:SF33">
    <property type="entry name" value="NATURAL RESISTANCE-ASSOCIATED MACROPHAGE PROTEIN 2"/>
    <property type="match status" value="1"/>
</dbReference>
<dbReference type="PANTHER" id="PTHR11706">
    <property type="entry name" value="SOLUTE CARRIER PROTEIN FAMILY 11 MEMBER"/>
    <property type="match status" value="1"/>
</dbReference>
<dbReference type="Pfam" id="PF01566">
    <property type="entry name" value="Nramp"/>
    <property type="match status" value="1"/>
</dbReference>
<dbReference type="PRINTS" id="PR00447">
    <property type="entry name" value="NATRESASSCMP"/>
</dbReference>
<organism>
    <name type="scientific">Caenorhabditis elegans</name>
    <dbReference type="NCBI Taxonomy" id="6239"/>
    <lineage>
        <taxon>Eukaryota</taxon>
        <taxon>Metazoa</taxon>
        <taxon>Ecdysozoa</taxon>
        <taxon>Nematoda</taxon>
        <taxon>Chromadorea</taxon>
        <taxon>Rhabditida</taxon>
        <taxon>Rhabditina</taxon>
        <taxon>Rhabditomorpha</taxon>
        <taxon>Rhabditoidea</taxon>
        <taxon>Rhabditidae</taxon>
        <taxon>Peloderinae</taxon>
        <taxon>Caenorhabditis</taxon>
    </lineage>
</organism>
<comment type="function">
    <text evidence="4 5">Probable divalent metal ion transporter which regulates Mn(2+) uptake.</text>
</comment>
<comment type="subcellular location">
    <subcellularLocation>
        <location evidence="5">Apical cell membrane</location>
        <topology evidence="1">Multi-pass membrane protein</topology>
    </subcellularLocation>
    <subcellularLocation>
        <location evidence="5">Cytoplasmic vesicle membrane</location>
    </subcellularLocation>
</comment>
<comment type="tissue specificity">
    <text evidence="3 4 5">Expressed in dopaminergic neurons (at protein level) (PubMed:19801673). Expressed predominantly in anterior and posterior intestine, rectal gland cell, H-shaped excretory cell, vulva cells, proximal uterus and spermatheca in adults (PubMed:19785996, PubMed:19924247). Weakly expressed in hyp7 hypodermis, pharyngeal muscles and some anterior sensory, ring and posterior head neurons in adults (PubMed:19785996, PubMed:19924247). Expressed in the anchor cell at the larval stage (PubMed:19924247).</text>
</comment>
<comment type="developmental stage">
    <text evidence="3">Expressed at the embryonic comma stage and throughout larval and adult stages.</text>
</comment>
<comment type="induction">
    <text evidence="3 4 5">Induced by pathogenic bacterium S.aureus (PubMed:19785996). Repressed by high levels of Mn(2+) (PubMed:19801673, PubMed:19924247).</text>
</comment>
<comment type="disruption phenotype">
    <text evidence="3 4 5">Higher iron levels in their body compared to wild-type. Increased survival rate and reduced iron levels in their body in response to increasing Mn(2+) levels (PubMed:19924247). Reduced survival rate in response to high Mn(2+) levels or to infection mediated by pathogenic bacterium S.aureus (PubMed:19785996). Increased smf-2 mRNA levels (PubMed:19924247). RNAi-mediated knockdown increases resistance to Mn(2+)-induced CEP neuron death and prevents CEP neuron death-mediated by the neurotoxin 6-hydroxy dopamine (6-OHDA) (PubMed:19801673).</text>
</comment>
<comment type="similarity">
    <text evidence="6">Belongs to the NRAMP family.</text>
</comment>
<proteinExistence type="evidence at protein level"/>
<keyword id="KW-1003">Cell membrane</keyword>
<keyword id="KW-0968">Cytoplasmic vesicle</keyword>
<keyword id="KW-0325">Glycoprotein</keyword>
<keyword id="KW-0406">Ion transport</keyword>
<keyword id="KW-0472">Membrane</keyword>
<keyword id="KW-1185">Reference proteome</keyword>
<keyword id="KW-0812">Transmembrane</keyword>
<keyword id="KW-1133">Transmembrane helix</keyword>
<keyword id="KW-0813">Transport</keyword>
<reference key="1">
    <citation type="journal article" date="1998" name="Science">
        <title>Genome sequence of the nematode C. elegans: a platform for investigating biology.</title>
        <authorList>
            <consortium name="The C. elegans sequencing consortium"/>
        </authorList>
    </citation>
    <scope>NUCLEOTIDE SEQUENCE [LARGE SCALE GENOMIC DNA]</scope>
    <scope>ALTERNATIVE SPLICING</scope>
    <source>
        <strain>Bristol N2</strain>
    </source>
</reference>
<reference key="2">
    <citation type="journal article" date="2009" name="Biochem. Biophys. Res. Commun.">
        <title>Functional assessment of Nramp-like metal transporters and manganese in Caenorhabditis elegans.</title>
        <authorList>
            <person name="Bandyopadhyay J."/>
            <person name="Song H.O."/>
            <person name="Park B.J."/>
            <person name="Singaravelu G."/>
            <person name="Sun J.L."/>
            <person name="Ahnn J."/>
            <person name="Cho J.H."/>
        </authorList>
    </citation>
    <scope>TISSUE SPECIFICITY</scope>
    <scope>DEVELOPMENTAL STAGE</scope>
    <scope>INDUCTION BY BACTERIA</scope>
    <scope>DISRUPTION PHENOTYPE</scope>
</reference>
<reference key="3">
    <citation type="journal article" date="2009" name="J. Biol. Chem.">
        <title>The divalent metal transporter homologues SMF-1/2 mediate dopamine neuron sensitivity in caenorhabditis elegans models of manganism and parkinson disease.</title>
        <authorList>
            <person name="Settivari R."/>
            <person name="Levora J."/>
            <person name="Nass R."/>
        </authorList>
    </citation>
    <scope>FUNCTION</scope>
    <scope>TISSUE SPECIFICITY</scope>
    <scope>INDUCTION BY MANGANESE</scope>
    <scope>DISRUPTION PHENOTYPE</scope>
</reference>
<reference key="4">
    <citation type="journal article" date="2009" name="PLoS ONE">
        <title>SMF-1, SMF-2 and SMF-3 DMT1 orthologues regulate and are regulated differentially by manganese levels in C. elegans.</title>
        <authorList>
            <person name="Au C."/>
            <person name="Benedetto A."/>
            <person name="Anderson J."/>
            <person name="Labrousse A."/>
            <person name="Erikson K."/>
            <person name="Ewbank J.J."/>
            <person name="Aschner M."/>
        </authorList>
    </citation>
    <scope>FUNCTION</scope>
    <scope>TISSUE SPECIFICITY</scope>
    <scope>INDUCTION BY MANGANESE</scope>
    <scope>DISRUPTION PHENOTYPE</scope>
</reference>
<gene>
    <name type="primary">smf-1</name>
    <name type="ORF">K11G12.4</name>
</gene>
<protein>
    <recommendedName>
        <fullName evidence="6">NRAMP-like transporter smf-1</fullName>
    </recommendedName>
    <alternativeName>
        <fullName evidence="6">Divalent metal transporter smf-1</fullName>
    </alternativeName>
</protein>
<evidence type="ECO:0000255" key="1"/>
<evidence type="ECO:0000255" key="2">
    <source>
        <dbReference type="PROSITE-ProRule" id="PRU00498"/>
    </source>
</evidence>
<evidence type="ECO:0000269" key="3">
    <source>
    </source>
</evidence>
<evidence type="ECO:0000269" key="4">
    <source>
    </source>
</evidence>
<evidence type="ECO:0000269" key="5">
    <source>
    </source>
</evidence>
<evidence type="ECO:0000305" key="6"/>
<sequence>MASSNNDGPIEPEAEPWRITQNDHLEQDLLEEDAESQERVDIPVDDVEKAFSFKKLWAFTGPGFLMSIAYLDPGNIESDLQSGAQAAYKLLWVLLSAHIIGMLLQRMSARLGVVSGKHMAEVAYQFYPRLPRIILWLMIEIAIVCSDMQEVIGTAIAIFLLSKGFVPLYVGVFITILDTFTFLLIDRYGIRKLELIFGFLILTMTVSFGYEFVVVKPPIGEVISGMVVPWCAGCGKGEFMQAISVVGAVIMPHNLYLHSALVKSRRVDRKDRRRVAEANKYFTLESAIALFLSFFINLFVVAVFAHGLYQKTNADVREMCIARHDIPDADIFPNNTEPVEVDIYKGGIYLGCQFGAIAMFIWGIGIFAAGQSSTMTGTYTGQFVMEGFVKIEWPKWKRVLITRAIAITPTLVLTFYSQGVQNLTGMNDFLNCVQMIQLPFALIPIITFTSSRKIMHDFRSSKVFQIFALITSALILSINVYFISDYVFSRLGSEWYIIMVLAPITFAYVLFVLYLALYCLVSCEIIPDTVSIRGFSFNKSYENDAPWLAVDSSAVHDNAGYQ</sequence>
<feature type="chain" id="PRO_0000212607" description="NRAMP-like transporter smf-1">
    <location>
        <begin position="1"/>
        <end position="562"/>
    </location>
</feature>
<feature type="topological domain" description="Cytoplasmic" evidence="6">
    <location>
        <begin position="1"/>
        <end position="55"/>
    </location>
</feature>
<feature type="transmembrane region" description="Helical" evidence="1">
    <location>
        <begin position="56"/>
        <end position="76"/>
    </location>
</feature>
<feature type="topological domain" description="Extracellular" evidence="6">
    <location>
        <begin position="77"/>
        <end position="83"/>
    </location>
</feature>
<feature type="transmembrane region" description="Helical" evidence="1">
    <location>
        <begin position="84"/>
        <end position="104"/>
    </location>
</feature>
<feature type="topological domain" description="Cytoplasmic" evidence="6">
    <location>
        <begin position="105"/>
        <end position="140"/>
    </location>
</feature>
<feature type="transmembrane region" description="Helical" evidence="1">
    <location>
        <begin position="141"/>
        <end position="161"/>
    </location>
</feature>
<feature type="topological domain" description="Extracellular" evidence="6">
    <location>
        <begin position="162"/>
        <end position="164"/>
    </location>
</feature>
<feature type="transmembrane region" description="Helical" evidence="1">
    <location>
        <begin position="165"/>
        <end position="185"/>
    </location>
</feature>
<feature type="topological domain" description="Cytoplasmic" evidence="6">
    <location>
        <begin position="186"/>
        <end position="194"/>
    </location>
</feature>
<feature type="transmembrane region" description="Helical" evidence="1">
    <location>
        <begin position="195"/>
        <end position="215"/>
    </location>
</feature>
<feature type="topological domain" description="Extracellular" evidence="6">
    <location>
        <begin position="216"/>
        <end position="241"/>
    </location>
</feature>
<feature type="transmembrane region" description="Helical" evidence="1">
    <location>
        <begin position="242"/>
        <end position="262"/>
    </location>
</feature>
<feature type="topological domain" description="Cytoplasmic" evidence="6">
    <location>
        <begin position="263"/>
        <end position="287"/>
    </location>
</feature>
<feature type="transmembrane region" description="Helical" evidence="1">
    <location>
        <begin position="288"/>
        <end position="308"/>
    </location>
</feature>
<feature type="topological domain" description="Extracellular" evidence="6">
    <location>
        <begin position="309"/>
        <end position="347"/>
    </location>
</feature>
<feature type="transmembrane region" description="Helical" evidence="1">
    <location>
        <begin position="348"/>
        <end position="368"/>
    </location>
</feature>
<feature type="topological domain" description="Cytoplasmic" evidence="6">
    <location>
        <begin position="369"/>
        <end position="398"/>
    </location>
</feature>
<feature type="transmembrane region" description="Helical" evidence="1">
    <location>
        <begin position="399"/>
        <end position="419"/>
    </location>
</feature>
<feature type="topological domain" description="Extracellular" evidence="6">
    <location>
        <begin position="420"/>
        <end position="428"/>
    </location>
</feature>
<feature type="transmembrane region" description="Helical" evidence="1">
    <location>
        <begin position="429"/>
        <end position="449"/>
    </location>
</feature>
<feature type="topological domain" description="Cytoplasmic" evidence="6">
    <location>
        <begin position="450"/>
        <end position="462"/>
    </location>
</feature>
<feature type="transmembrane region" description="Helical" evidence="1">
    <location>
        <begin position="463"/>
        <end position="483"/>
    </location>
</feature>
<feature type="topological domain" description="Extracellular" evidence="6">
    <location>
        <begin position="484"/>
        <end position="496"/>
    </location>
</feature>
<feature type="transmembrane region" description="Helical" evidence="1">
    <location>
        <begin position="497"/>
        <end position="517"/>
    </location>
</feature>
<feature type="topological domain" description="Cytoplasmic" evidence="6">
    <location>
        <begin position="518"/>
        <end position="562"/>
    </location>
</feature>
<feature type="glycosylation site" description="N-linked (GlcNAc...) asparagine" evidence="2">
    <location>
        <position position="334"/>
    </location>
</feature>
<feature type="glycosylation site" description="N-linked (GlcNAc...) asparagine" evidence="2">
    <location>
        <position position="422"/>
    </location>
</feature>
<accession>Q21434</accession>
<accession>Q65ZJ5</accession>
<name>NRAMA_CAEEL</name>